<accession>C6BYX7</accession>
<protein>
    <recommendedName>
        <fullName evidence="1">Proline--tRNA ligase</fullName>
        <ecNumber evidence="1">6.1.1.15</ecNumber>
    </recommendedName>
    <alternativeName>
        <fullName evidence="1">Prolyl-tRNA synthetase</fullName>
        <shortName evidence="1">ProRS</shortName>
    </alternativeName>
</protein>
<name>SYP_MARSD</name>
<reference key="1">
    <citation type="submission" date="2009-06" db="EMBL/GenBank/DDBJ databases">
        <title>Complete sequence of Desulfovibrio salexigens DSM 2638.</title>
        <authorList>
            <consortium name="US DOE Joint Genome Institute"/>
            <person name="Lucas S."/>
            <person name="Copeland A."/>
            <person name="Lapidus A."/>
            <person name="Glavina del Rio T."/>
            <person name="Tice H."/>
            <person name="Bruce D."/>
            <person name="Goodwin L."/>
            <person name="Pitluck S."/>
            <person name="Munk A.C."/>
            <person name="Brettin T."/>
            <person name="Detter J.C."/>
            <person name="Han C."/>
            <person name="Tapia R."/>
            <person name="Larimer F."/>
            <person name="Land M."/>
            <person name="Hauser L."/>
            <person name="Kyrpides N."/>
            <person name="Anderson I."/>
            <person name="Wall J.D."/>
            <person name="Arkin A.P."/>
            <person name="Dehal P."/>
            <person name="Chivian D."/>
            <person name="Giles B."/>
            <person name="Hazen T.C."/>
        </authorList>
    </citation>
    <scope>NUCLEOTIDE SEQUENCE [LARGE SCALE GENOMIC DNA]</scope>
    <source>
        <strain>ATCC 14822 / DSM 2638 / NCIMB 8403 / VKM B-1763</strain>
    </source>
</reference>
<comment type="function">
    <text evidence="1">Catalyzes the attachment of proline to tRNA(Pro) in a two-step reaction: proline is first activated by ATP to form Pro-AMP and then transferred to the acceptor end of tRNA(Pro). As ProRS can inadvertently accommodate and process non-cognate amino acids such as alanine and cysteine, to avoid such errors it has two additional distinct editing activities against alanine. One activity is designated as 'pretransfer' editing and involves the tRNA(Pro)-independent hydrolysis of activated Ala-AMP. The other activity is designated 'posttransfer' editing and involves deacylation of mischarged Ala-tRNA(Pro). The misacylated Cys-tRNA(Pro) is not edited by ProRS.</text>
</comment>
<comment type="catalytic activity">
    <reaction evidence="1">
        <text>tRNA(Pro) + L-proline + ATP = L-prolyl-tRNA(Pro) + AMP + diphosphate</text>
        <dbReference type="Rhea" id="RHEA:14305"/>
        <dbReference type="Rhea" id="RHEA-COMP:9700"/>
        <dbReference type="Rhea" id="RHEA-COMP:9702"/>
        <dbReference type="ChEBI" id="CHEBI:30616"/>
        <dbReference type="ChEBI" id="CHEBI:33019"/>
        <dbReference type="ChEBI" id="CHEBI:60039"/>
        <dbReference type="ChEBI" id="CHEBI:78442"/>
        <dbReference type="ChEBI" id="CHEBI:78532"/>
        <dbReference type="ChEBI" id="CHEBI:456215"/>
        <dbReference type="EC" id="6.1.1.15"/>
    </reaction>
</comment>
<comment type="subunit">
    <text evidence="1">Homodimer.</text>
</comment>
<comment type="subcellular location">
    <subcellularLocation>
        <location evidence="1">Cytoplasm</location>
    </subcellularLocation>
</comment>
<comment type="domain">
    <text evidence="1">Consists of three domains: the N-terminal catalytic domain, the editing domain and the C-terminal anticodon-binding domain.</text>
</comment>
<comment type="similarity">
    <text evidence="1">Belongs to the class-II aminoacyl-tRNA synthetase family. ProS type 1 subfamily.</text>
</comment>
<keyword id="KW-0030">Aminoacyl-tRNA synthetase</keyword>
<keyword id="KW-0067">ATP-binding</keyword>
<keyword id="KW-0963">Cytoplasm</keyword>
<keyword id="KW-0436">Ligase</keyword>
<keyword id="KW-0547">Nucleotide-binding</keyword>
<keyword id="KW-0648">Protein biosynthesis</keyword>
<keyword id="KW-1185">Reference proteome</keyword>
<evidence type="ECO:0000255" key="1">
    <source>
        <dbReference type="HAMAP-Rule" id="MF_01569"/>
    </source>
</evidence>
<sequence>MRLSRYYIPTLKEDPSEAEVVSHKLLMRAGMIRKLTSGIYNYLPLGLKSVNKVAAIVREEMNRAGALEVLMPMVQPGDLWQETGRWDYYGKELLRVKDRHGRDYCLGPTHEEVITDLVRGEVKSYKQLPLNLYQIQTKFRDEIRPRFGLMRGREFIMKDAYSFDKDEAGAEESYRGMFEAYKKAFSRIGLNFRPVQADSGAIGGDFSHEFHVLADTGEDTIAVCKDEKCGYAANLEKAKVAAPTGESMLNAECPAIEEVATPGKHTVEEVCEFLGVEQDKLVKTLLFTVDGEPVAALVRGDRELNDVKLRNLVGGNEIEMASEEQVKEWTGAPVGFAGPVGLKIERIFADHELLTETDWIAGANKGDTHIKHLSLGRDCKIEQFADLRVITEADPCPECGAAIEFTKGIEVGHVFKLGSKYSKSMEATFLDENGKTQPMVMGCYGIGVSRIVASAIEQNNDENGAIFPPTIAPFELCVISLGGKDEAVNEKAEEFYNELMEMGIDAAYDDRKERPGVKFADADLIGYPMQLVIGGKGLKNGIVEAKNRKTGEKIELPLEGFTEAFKAWRAEIWQSWGLKA</sequence>
<organism>
    <name type="scientific">Maridesulfovibrio salexigens (strain ATCC 14822 / DSM 2638 / NCIMB 8403 / VKM B-1763)</name>
    <name type="common">Desulfovibrio salexigens</name>
    <dbReference type="NCBI Taxonomy" id="526222"/>
    <lineage>
        <taxon>Bacteria</taxon>
        <taxon>Pseudomonadati</taxon>
        <taxon>Thermodesulfobacteriota</taxon>
        <taxon>Desulfovibrionia</taxon>
        <taxon>Desulfovibrionales</taxon>
        <taxon>Desulfovibrionaceae</taxon>
        <taxon>Maridesulfovibrio</taxon>
    </lineage>
</organism>
<proteinExistence type="inferred from homology"/>
<gene>
    <name evidence="1" type="primary">proS</name>
    <name type="ordered locus">Desal_0735</name>
</gene>
<feature type="chain" id="PRO_1000215525" description="Proline--tRNA ligase">
    <location>
        <begin position="1"/>
        <end position="580"/>
    </location>
</feature>
<dbReference type="EC" id="6.1.1.15" evidence="1"/>
<dbReference type="EMBL" id="CP001649">
    <property type="protein sequence ID" value="ACS78801.1"/>
    <property type="molecule type" value="Genomic_DNA"/>
</dbReference>
<dbReference type="RefSeq" id="WP_015850620.1">
    <property type="nucleotide sequence ID" value="NC_012881.1"/>
</dbReference>
<dbReference type="SMR" id="C6BYX7"/>
<dbReference type="STRING" id="526222.Desal_0735"/>
<dbReference type="KEGG" id="dsa:Desal_0735"/>
<dbReference type="eggNOG" id="COG0442">
    <property type="taxonomic scope" value="Bacteria"/>
</dbReference>
<dbReference type="HOGENOM" id="CLU_016739_0_0_7"/>
<dbReference type="OrthoDB" id="9809052at2"/>
<dbReference type="Proteomes" id="UP000002601">
    <property type="component" value="Chromosome"/>
</dbReference>
<dbReference type="GO" id="GO:0005829">
    <property type="term" value="C:cytosol"/>
    <property type="evidence" value="ECO:0007669"/>
    <property type="project" value="TreeGrafter"/>
</dbReference>
<dbReference type="GO" id="GO:0002161">
    <property type="term" value="F:aminoacyl-tRNA deacylase activity"/>
    <property type="evidence" value="ECO:0007669"/>
    <property type="project" value="InterPro"/>
</dbReference>
<dbReference type="GO" id="GO:0005524">
    <property type="term" value="F:ATP binding"/>
    <property type="evidence" value="ECO:0007669"/>
    <property type="project" value="UniProtKB-UniRule"/>
</dbReference>
<dbReference type="GO" id="GO:0004827">
    <property type="term" value="F:proline-tRNA ligase activity"/>
    <property type="evidence" value="ECO:0007669"/>
    <property type="project" value="UniProtKB-UniRule"/>
</dbReference>
<dbReference type="GO" id="GO:0006433">
    <property type="term" value="P:prolyl-tRNA aminoacylation"/>
    <property type="evidence" value="ECO:0007669"/>
    <property type="project" value="UniProtKB-UniRule"/>
</dbReference>
<dbReference type="CDD" id="cd04334">
    <property type="entry name" value="ProRS-INS"/>
    <property type="match status" value="1"/>
</dbReference>
<dbReference type="CDD" id="cd00861">
    <property type="entry name" value="ProRS_anticodon_short"/>
    <property type="match status" value="1"/>
</dbReference>
<dbReference type="CDD" id="cd00779">
    <property type="entry name" value="ProRS_core_prok"/>
    <property type="match status" value="1"/>
</dbReference>
<dbReference type="FunFam" id="3.30.930.10:FF:000065">
    <property type="entry name" value="Proline--tRNA ligase"/>
    <property type="match status" value="1"/>
</dbReference>
<dbReference type="FunFam" id="3.30.930.10:FF:000066">
    <property type="entry name" value="Proline--tRNA ligase"/>
    <property type="match status" value="1"/>
</dbReference>
<dbReference type="Gene3D" id="3.40.50.800">
    <property type="entry name" value="Anticodon-binding domain"/>
    <property type="match status" value="1"/>
</dbReference>
<dbReference type="Gene3D" id="3.30.930.10">
    <property type="entry name" value="Bira Bifunctional Protein, Domain 2"/>
    <property type="match status" value="2"/>
</dbReference>
<dbReference type="HAMAP" id="MF_01569">
    <property type="entry name" value="Pro_tRNA_synth_type1"/>
    <property type="match status" value="1"/>
</dbReference>
<dbReference type="InterPro" id="IPR002314">
    <property type="entry name" value="aa-tRNA-synt_IIb"/>
</dbReference>
<dbReference type="InterPro" id="IPR006195">
    <property type="entry name" value="aa-tRNA-synth_II"/>
</dbReference>
<dbReference type="InterPro" id="IPR045864">
    <property type="entry name" value="aa-tRNA-synth_II/BPL/LPL"/>
</dbReference>
<dbReference type="InterPro" id="IPR004154">
    <property type="entry name" value="Anticodon-bd"/>
</dbReference>
<dbReference type="InterPro" id="IPR036621">
    <property type="entry name" value="Anticodon-bd_dom_sf"/>
</dbReference>
<dbReference type="InterPro" id="IPR002316">
    <property type="entry name" value="Pro-tRNA-ligase_IIa"/>
</dbReference>
<dbReference type="InterPro" id="IPR004500">
    <property type="entry name" value="Pro-tRNA-synth_IIa_bac-type"/>
</dbReference>
<dbReference type="InterPro" id="IPR023717">
    <property type="entry name" value="Pro-tRNA-Synthase_IIa_type1"/>
</dbReference>
<dbReference type="InterPro" id="IPR050062">
    <property type="entry name" value="Pro-tRNA_synthetase"/>
</dbReference>
<dbReference type="InterPro" id="IPR044140">
    <property type="entry name" value="ProRS_anticodon_short"/>
</dbReference>
<dbReference type="InterPro" id="IPR033730">
    <property type="entry name" value="ProRS_core_prok"/>
</dbReference>
<dbReference type="InterPro" id="IPR036754">
    <property type="entry name" value="YbaK/aa-tRNA-synt-asso_dom_sf"/>
</dbReference>
<dbReference type="InterPro" id="IPR007214">
    <property type="entry name" value="YbaK/aa-tRNA-synth-assoc-dom"/>
</dbReference>
<dbReference type="NCBIfam" id="NF006625">
    <property type="entry name" value="PRK09194.1"/>
    <property type="match status" value="1"/>
</dbReference>
<dbReference type="NCBIfam" id="TIGR00409">
    <property type="entry name" value="proS_fam_II"/>
    <property type="match status" value="1"/>
</dbReference>
<dbReference type="PANTHER" id="PTHR42753">
    <property type="entry name" value="MITOCHONDRIAL RIBOSOME PROTEIN L39/PROLYL-TRNA LIGASE FAMILY MEMBER"/>
    <property type="match status" value="1"/>
</dbReference>
<dbReference type="PANTHER" id="PTHR42753:SF2">
    <property type="entry name" value="PROLINE--TRNA LIGASE"/>
    <property type="match status" value="1"/>
</dbReference>
<dbReference type="Pfam" id="PF03129">
    <property type="entry name" value="HGTP_anticodon"/>
    <property type="match status" value="1"/>
</dbReference>
<dbReference type="Pfam" id="PF00587">
    <property type="entry name" value="tRNA-synt_2b"/>
    <property type="match status" value="1"/>
</dbReference>
<dbReference type="Pfam" id="PF04073">
    <property type="entry name" value="tRNA_edit"/>
    <property type="match status" value="1"/>
</dbReference>
<dbReference type="PIRSF" id="PIRSF001535">
    <property type="entry name" value="ProRS_1"/>
    <property type="match status" value="1"/>
</dbReference>
<dbReference type="PRINTS" id="PR01046">
    <property type="entry name" value="TRNASYNTHPRO"/>
</dbReference>
<dbReference type="SUPFAM" id="SSF52954">
    <property type="entry name" value="Class II aaRS ABD-related"/>
    <property type="match status" value="1"/>
</dbReference>
<dbReference type="SUPFAM" id="SSF55681">
    <property type="entry name" value="Class II aaRS and biotin synthetases"/>
    <property type="match status" value="1"/>
</dbReference>
<dbReference type="SUPFAM" id="SSF55826">
    <property type="entry name" value="YbaK/ProRS associated domain"/>
    <property type="match status" value="1"/>
</dbReference>
<dbReference type="PROSITE" id="PS50862">
    <property type="entry name" value="AA_TRNA_LIGASE_II"/>
    <property type="match status" value="1"/>
</dbReference>